<evidence type="ECO:0000250" key="1"/>
<evidence type="ECO:0000255" key="2">
    <source>
        <dbReference type="HAMAP-Rule" id="MF_00403"/>
    </source>
</evidence>
<evidence type="ECO:0000256" key="3">
    <source>
        <dbReference type="SAM" id="MobiDB-lite"/>
    </source>
</evidence>
<evidence type="ECO:0000305" key="4"/>
<accession>Q4A8T5</accession>
<feature type="chain" id="PRO_0000226394" description="Small ribosomal subunit protein uS12">
    <location>
        <begin position="1"/>
        <end position="139"/>
    </location>
</feature>
<feature type="region of interest" description="Disordered" evidence="3">
    <location>
        <begin position="116"/>
        <end position="139"/>
    </location>
</feature>
<feature type="compositionally biased region" description="Basic residues" evidence="3">
    <location>
        <begin position="124"/>
        <end position="139"/>
    </location>
</feature>
<feature type="modified residue" description="3-methylthioaspartic acid" evidence="1">
    <location>
        <position position="102"/>
    </location>
</feature>
<comment type="function">
    <text evidence="2">With S4 and S5 plays an important role in translational accuracy.</text>
</comment>
<comment type="function">
    <text evidence="2">Interacts with and stabilizes bases of the 16S rRNA that are involved in tRNA selection in the A site and with the mRNA backbone. Located at the interface of the 30S and 50S subunits, it traverses the body of the 30S subunit contacting proteins on the other side and probably holding the rRNA structure together. The combined cluster of proteins S8, S12 and S17 appears to hold together the shoulder and platform of the 30S subunit.</text>
</comment>
<comment type="subunit">
    <text evidence="2">Part of the 30S ribosomal subunit. Contacts proteins S8 and S17. May interact with IF1 in the 30S initiation complex.</text>
</comment>
<comment type="similarity">
    <text evidence="2">Belongs to the universal ribosomal protein uS12 family.</text>
</comment>
<protein>
    <recommendedName>
        <fullName evidence="2">Small ribosomal subunit protein uS12</fullName>
    </recommendedName>
    <alternativeName>
        <fullName evidence="4">30S ribosomal protein S12</fullName>
    </alternativeName>
</protein>
<organism>
    <name type="scientific">Mesomycoplasma hyopneumoniae (strain 7448)</name>
    <name type="common">Mycoplasma hyopneumoniae</name>
    <dbReference type="NCBI Taxonomy" id="262722"/>
    <lineage>
        <taxon>Bacteria</taxon>
        <taxon>Bacillati</taxon>
        <taxon>Mycoplasmatota</taxon>
        <taxon>Mycoplasmoidales</taxon>
        <taxon>Metamycoplasmataceae</taxon>
        <taxon>Mesomycoplasma</taxon>
    </lineage>
</organism>
<reference key="1">
    <citation type="journal article" date="2005" name="J. Bacteriol.">
        <title>Swine and poultry pathogens: the complete genome sequences of two strains of Mycoplasma hyopneumoniae and a strain of Mycoplasma synoviae.</title>
        <authorList>
            <person name="Vasconcelos A.T.R."/>
            <person name="Ferreira H.B."/>
            <person name="Bizarro C.V."/>
            <person name="Bonatto S.L."/>
            <person name="Carvalho M.O."/>
            <person name="Pinto P.M."/>
            <person name="Almeida D.F."/>
            <person name="Almeida L.G.P."/>
            <person name="Almeida R."/>
            <person name="Alves-Junior L."/>
            <person name="Assuncao E.N."/>
            <person name="Azevedo V.A.C."/>
            <person name="Bogo M.R."/>
            <person name="Brigido M.M."/>
            <person name="Brocchi M."/>
            <person name="Burity H.A."/>
            <person name="Camargo A.A."/>
            <person name="Camargo S.S."/>
            <person name="Carepo M.S."/>
            <person name="Carraro D.M."/>
            <person name="de Mattos Cascardo J.C."/>
            <person name="Castro L.A."/>
            <person name="Cavalcanti G."/>
            <person name="Chemale G."/>
            <person name="Collevatti R.G."/>
            <person name="Cunha C.W."/>
            <person name="Dallagiovanna B."/>
            <person name="Dambros B.P."/>
            <person name="Dellagostin O.A."/>
            <person name="Falcao C."/>
            <person name="Fantinatti-Garboggini F."/>
            <person name="Felipe M.S.S."/>
            <person name="Fiorentin L."/>
            <person name="Franco G.R."/>
            <person name="Freitas N.S.A."/>
            <person name="Frias D."/>
            <person name="Grangeiro T.B."/>
            <person name="Grisard E.C."/>
            <person name="Guimaraes C.T."/>
            <person name="Hungria M."/>
            <person name="Jardim S.N."/>
            <person name="Krieger M.A."/>
            <person name="Laurino J.P."/>
            <person name="Lima L.F.A."/>
            <person name="Lopes M.I."/>
            <person name="Loreto E.L.S."/>
            <person name="Madeira H.M.F."/>
            <person name="Manfio G.P."/>
            <person name="Maranhao A.Q."/>
            <person name="Martinkovics C.T."/>
            <person name="Medeiros S.R.B."/>
            <person name="Moreira M.A.M."/>
            <person name="Neiva M."/>
            <person name="Ramalho-Neto C.E."/>
            <person name="Nicolas M.F."/>
            <person name="Oliveira S.C."/>
            <person name="Paixao R.F.C."/>
            <person name="Pedrosa F.O."/>
            <person name="Pena S.D.J."/>
            <person name="Pereira M."/>
            <person name="Pereira-Ferrari L."/>
            <person name="Piffer I."/>
            <person name="Pinto L.S."/>
            <person name="Potrich D.P."/>
            <person name="Salim A.C.M."/>
            <person name="Santos F.R."/>
            <person name="Schmitt R."/>
            <person name="Schneider M.P.C."/>
            <person name="Schrank A."/>
            <person name="Schrank I.S."/>
            <person name="Schuck A.F."/>
            <person name="Seuanez H.N."/>
            <person name="Silva D.W."/>
            <person name="Silva R."/>
            <person name="Silva S.C."/>
            <person name="Soares C.M.A."/>
            <person name="Souza K.R.L."/>
            <person name="Souza R.C."/>
            <person name="Staats C.C."/>
            <person name="Steffens M.B.R."/>
            <person name="Teixeira S.M.R."/>
            <person name="Urmenyi T.P."/>
            <person name="Vainstein M.H."/>
            <person name="Zuccherato L.W."/>
            <person name="Simpson A.J.G."/>
            <person name="Zaha A."/>
        </authorList>
    </citation>
    <scope>NUCLEOTIDE SEQUENCE [LARGE SCALE GENOMIC DNA]</scope>
    <source>
        <strain>7448</strain>
    </source>
</reference>
<sequence length="139" mass="15462">MPTISQLAKGCRVKKTWKSKVPALNMLYNSLHKKELKLSAPFKRGVCTRVATMTPKKPNSALRKFARVKLSNGIEVNAYIPGEGHNLQEHSIVLIRGGKVKDLPGIRYHIVRGTQDTTGVAKRSQGRSKYGAKRPKKSK</sequence>
<gene>
    <name evidence="2" type="primary">rpsL</name>
    <name type="ordered locus">MHP7448_0077</name>
</gene>
<dbReference type="EMBL" id="AE017244">
    <property type="protein sequence ID" value="AAZ53454.1"/>
    <property type="molecule type" value="Genomic_DNA"/>
</dbReference>
<dbReference type="RefSeq" id="WP_011205923.1">
    <property type="nucleotide sequence ID" value="NC_007332.1"/>
</dbReference>
<dbReference type="SMR" id="Q4A8T5"/>
<dbReference type="GeneID" id="41334363"/>
<dbReference type="KEGG" id="mhp:MHP7448_0077"/>
<dbReference type="HOGENOM" id="CLU_104295_1_2_14"/>
<dbReference type="Proteomes" id="UP000000553">
    <property type="component" value="Chromosome"/>
</dbReference>
<dbReference type="GO" id="GO:0015935">
    <property type="term" value="C:small ribosomal subunit"/>
    <property type="evidence" value="ECO:0007669"/>
    <property type="project" value="InterPro"/>
</dbReference>
<dbReference type="GO" id="GO:0019843">
    <property type="term" value="F:rRNA binding"/>
    <property type="evidence" value="ECO:0007669"/>
    <property type="project" value="UniProtKB-UniRule"/>
</dbReference>
<dbReference type="GO" id="GO:0003735">
    <property type="term" value="F:structural constituent of ribosome"/>
    <property type="evidence" value="ECO:0007669"/>
    <property type="project" value="InterPro"/>
</dbReference>
<dbReference type="GO" id="GO:0000049">
    <property type="term" value="F:tRNA binding"/>
    <property type="evidence" value="ECO:0007669"/>
    <property type="project" value="UniProtKB-UniRule"/>
</dbReference>
<dbReference type="GO" id="GO:0006412">
    <property type="term" value="P:translation"/>
    <property type="evidence" value="ECO:0007669"/>
    <property type="project" value="UniProtKB-UniRule"/>
</dbReference>
<dbReference type="CDD" id="cd03368">
    <property type="entry name" value="Ribosomal_S12"/>
    <property type="match status" value="1"/>
</dbReference>
<dbReference type="FunFam" id="2.40.50.140:FF:000099">
    <property type="entry name" value="Ribosomal protein S12, mitochondrial"/>
    <property type="match status" value="1"/>
</dbReference>
<dbReference type="Gene3D" id="2.40.50.140">
    <property type="entry name" value="Nucleic acid-binding proteins"/>
    <property type="match status" value="1"/>
</dbReference>
<dbReference type="HAMAP" id="MF_00403_B">
    <property type="entry name" value="Ribosomal_uS12_B"/>
    <property type="match status" value="1"/>
</dbReference>
<dbReference type="InterPro" id="IPR012340">
    <property type="entry name" value="NA-bd_OB-fold"/>
</dbReference>
<dbReference type="InterPro" id="IPR006032">
    <property type="entry name" value="Ribosomal_uS12"/>
</dbReference>
<dbReference type="InterPro" id="IPR005679">
    <property type="entry name" value="Ribosomal_uS12_bac"/>
</dbReference>
<dbReference type="NCBIfam" id="TIGR00981">
    <property type="entry name" value="rpsL_bact"/>
    <property type="match status" value="1"/>
</dbReference>
<dbReference type="PANTHER" id="PTHR11652">
    <property type="entry name" value="30S RIBOSOMAL PROTEIN S12 FAMILY MEMBER"/>
    <property type="match status" value="1"/>
</dbReference>
<dbReference type="Pfam" id="PF00164">
    <property type="entry name" value="Ribosom_S12_S23"/>
    <property type="match status" value="1"/>
</dbReference>
<dbReference type="PRINTS" id="PR01034">
    <property type="entry name" value="RIBOSOMALS12"/>
</dbReference>
<dbReference type="SUPFAM" id="SSF50249">
    <property type="entry name" value="Nucleic acid-binding proteins"/>
    <property type="match status" value="1"/>
</dbReference>
<dbReference type="PROSITE" id="PS00055">
    <property type="entry name" value="RIBOSOMAL_S12"/>
    <property type="match status" value="1"/>
</dbReference>
<proteinExistence type="inferred from homology"/>
<keyword id="KW-0488">Methylation</keyword>
<keyword id="KW-0687">Ribonucleoprotein</keyword>
<keyword id="KW-0689">Ribosomal protein</keyword>
<keyword id="KW-0694">RNA-binding</keyword>
<keyword id="KW-0699">rRNA-binding</keyword>
<keyword id="KW-0820">tRNA-binding</keyword>
<name>RS12_MESH7</name>